<evidence type="ECO:0000255" key="1">
    <source>
        <dbReference type="HAMAP-Rule" id="MF_00818"/>
    </source>
</evidence>
<sequence length="166" mass="19645">MAHGRQQDELQDITLLGNQDNTYNFDYRPDVLESFDNKHQGRDYFVKFNCPEFTSLCPITGQPDFATIYISYIPNVKMVESKSLKLYLFSFRNHGDFHEDCMNIIMNDLIELMDPHYIEVWGKFTPRGGISIDPYTNYGRPNSKYEKMAEHRLMNHDLYPEKIDNR</sequence>
<accession>Q7A1H9</accession>
<organism>
    <name type="scientific">Staphylococcus aureus (strain MW2)</name>
    <dbReference type="NCBI Taxonomy" id="196620"/>
    <lineage>
        <taxon>Bacteria</taxon>
        <taxon>Bacillati</taxon>
        <taxon>Bacillota</taxon>
        <taxon>Bacilli</taxon>
        <taxon>Bacillales</taxon>
        <taxon>Staphylococcaceae</taxon>
        <taxon>Staphylococcus</taxon>
    </lineage>
</organism>
<keyword id="KW-0963">Cytoplasm</keyword>
<keyword id="KW-0521">NADP</keyword>
<keyword id="KW-0560">Oxidoreductase</keyword>
<keyword id="KW-0671">Queuosine biosynthesis</keyword>
<reference key="1">
    <citation type="journal article" date="2002" name="Lancet">
        <title>Genome and virulence determinants of high virulence community-acquired MRSA.</title>
        <authorList>
            <person name="Baba T."/>
            <person name="Takeuchi F."/>
            <person name="Kuroda M."/>
            <person name="Yuzawa H."/>
            <person name="Aoki K."/>
            <person name="Oguchi A."/>
            <person name="Nagai Y."/>
            <person name="Iwama N."/>
            <person name="Asano K."/>
            <person name="Naimi T."/>
            <person name="Kuroda H."/>
            <person name="Cui L."/>
            <person name="Yamamoto K."/>
            <person name="Hiramatsu K."/>
        </authorList>
    </citation>
    <scope>NUCLEOTIDE SEQUENCE [LARGE SCALE GENOMIC DNA]</scope>
    <source>
        <strain>MW2</strain>
    </source>
</reference>
<gene>
    <name evidence="1" type="primary">queF</name>
    <name type="ordered locus">MW0690</name>
</gene>
<proteinExistence type="inferred from homology"/>
<dbReference type="EC" id="1.7.1.13" evidence="1"/>
<dbReference type="EMBL" id="BA000033">
    <property type="protein sequence ID" value="BAB94555.1"/>
    <property type="molecule type" value="Genomic_DNA"/>
</dbReference>
<dbReference type="RefSeq" id="WP_000930014.1">
    <property type="nucleotide sequence ID" value="NC_003923.1"/>
</dbReference>
<dbReference type="SMR" id="Q7A1H9"/>
<dbReference type="KEGG" id="sam:MW0690"/>
<dbReference type="HOGENOM" id="CLU_102489_0_1_9"/>
<dbReference type="UniPathway" id="UPA00392"/>
<dbReference type="GO" id="GO:0005737">
    <property type="term" value="C:cytoplasm"/>
    <property type="evidence" value="ECO:0007669"/>
    <property type="project" value="UniProtKB-SubCell"/>
</dbReference>
<dbReference type="GO" id="GO:0033739">
    <property type="term" value="F:preQ1 synthase activity"/>
    <property type="evidence" value="ECO:0007669"/>
    <property type="project" value="UniProtKB-UniRule"/>
</dbReference>
<dbReference type="GO" id="GO:0008616">
    <property type="term" value="P:queuosine biosynthetic process"/>
    <property type="evidence" value="ECO:0007669"/>
    <property type="project" value="UniProtKB-UniRule"/>
</dbReference>
<dbReference type="GO" id="GO:0006400">
    <property type="term" value="P:tRNA modification"/>
    <property type="evidence" value="ECO:0007669"/>
    <property type="project" value="UniProtKB-UniRule"/>
</dbReference>
<dbReference type="Gene3D" id="3.30.1130.10">
    <property type="match status" value="1"/>
</dbReference>
<dbReference type="HAMAP" id="MF_00818">
    <property type="entry name" value="QueF_type1"/>
    <property type="match status" value="1"/>
</dbReference>
<dbReference type="InterPro" id="IPR043133">
    <property type="entry name" value="GTP-CH-I_C/QueF"/>
</dbReference>
<dbReference type="InterPro" id="IPR050084">
    <property type="entry name" value="NADPH_dep_7-cyano-7-deazaG_red"/>
</dbReference>
<dbReference type="InterPro" id="IPR029500">
    <property type="entry name" value="QueF"/>
</dbReference>
<dbReference type="InterPro" id="IPR016856">
    <property type="entry name" value="QueF_type1"/>
</dbReference>
<dbReference type="NCBIfam" id="TIGR03139">
    <property type="entry name" value="QueF-II"/>
    <property type="match status" value="1"/>
</dbReference>
<dbReference type="PANTHER" id="PTHR34354">
    <property type="entry name" value="NADPH-DEPENDENT 7-CYANO-7-DEAZAGUANINE REDUCTASE"/>
    <property type="match status" value="1"/>
</dbReference>
<dbReference type="PANTHER" id="PTHR34354:SF1">
    <property type="entry name" value="NADPH-DEPENDENT 7-CYANO-7-DEAZAGUANINE REDUCTASE"/>
    <property type="match status" value="1"/>
</dbReference>
<dbReference type="Pfam" id="PF14489">
    <property type="entry name" value="QueF"/>
    <property type="match status" value="1"/>
</dbReference>
<dbReference type="PIRSF" id="PIRSF027377">
    <property type="entry name" value="Nitrile_oxidored_QueF"/>
    <property type="match status" value="1"/>
</dbReference>
<dbReference type="SUPFAM" id="SSF55620">
    <property type="entry name" value="Tetrahydrobiopterin biosynthesis enzymes-like"/>
    <property type="match status" value="1"/>
</dbReference>
<comment type="function">
    <text evidence="1">Catalyzes the NADPH-dependent reduction of 7-cyano-7-deazaguanine (preQ0) to 7-aminomethyl-7-deazaguanine (preQ1).</text>
</comment>
<comment type="catalytic activity">
    <reaction evidence="1">
        <text>7-aminomethyl-7-carbaguanine + 2 NADP(+) = 7-cyano-7-deazaguanine + 2 NADPH + 3 H(+)</text>
        <dbReference type="Rhea" id="RHEA:13409"/>
        <dbReference type="ChEBI" id="CHEBI:15378"/>
        <dbReference type="ChEBI" id="CHEBI:45075"/>
        <dbReference type="ChEBI" id="CHEBI:57783"/>
        <dbReference type="ChEBI" id="CHEBI:58349"/>
        <dbReference type="ChEBI" id="CHEBI:58703"/>
        <dbReference type="EC" id="1.7.1.13"/>
    </reaction>
</comment>
<comment type="pathway">
    <text evidence="1">tRNA modification; tRNA-queuosine biosynthesis.</text>
</comment>
<comment type="subcellular location">
    <subcellularLocation>
        <location evidence="1">Cytoplasm</location>
    </subcellularLocation>
</comment>
<comment type="similarity">
    <text evidence="1">Belongs to the GTP cyclohydrolase I family. QueF type 1 subfamily.</text>
</comment>
<name>QUEF_STAAW</name>
<protein>
    <recommendedName>
        <fullName evidence="1">NADPH-dependent 7-cyano-7-deazaguanine reductase</fullName>
        <ecNumber evidence="1">1.7.1.13</ecNumber>
    </recommendedName>
    <alternativeName>
        <fullName evidence="1">7-cyano-7-carbaguanine reductase</fullName>
    </alternativeName>
    <alternativeName>
        <fullName evidence="1">NADPH-dependent nitrile oxidoreductase</fullName>
    </alternativeName>
    <alternativeName>
        <fullName evidence="1">PreQ(0) reductase</fullName>
    </alternativeName>
</protein>
<feature type="chain" id="PRO_0000162998" description="NADPH-dependent 7-cyano-7-deazaguanine reductase">
    <location>
        <begin position="1"/>
        <end position="166"/>
    </location>
</feature>
<feature type="active site" description="Thioimide intermediate" evidence="1">
    <location>
        <position position="57"/>
    </location>
</feature>
<feature type="active site" description="Proton donor" evidence="1">
    <location>
        <position position="64"/>
    </location>
</feature>
<feature type="binding site" evidence="1">
    <location>
        <begin position="79"/>
        <end position="81"/>
    </location>
    <ligand>
        <name>substrate</name>
    </ligand>
</feature>
<feature type="binding site" evidence="1">
    <location>
        <begin position="98"/>
        <end position="99"/>
    </location>
    <ligand>
        <name>substrate</name>
    </ligand>
</feature>